<feature type="chain" id="PRO_1000083180" description="High frequency lysogenization protein HflD homolog">
    <location>
        <begin position="1"/>
        <end position="205"/>
    </location>
</feature>
<comment type="subcellular location">
    <subcellularLocation>
        <location>Cytoplasm</location>
    </subcellularLocation>
    <subcellularLocation>
        <location evidence="1">Cell inner membrane</location>
        <topology evidence="1">Peripheral membrane protein</topology>
        <orientation evidence="1">Cytoplasmic side</orientation>
    </subcellularLocation>
</comment>
<comment type="similarity">
    <text evidence="1">Belongs to the HflD family.</text>
</comment>
<organism>
    <name type="scientific">Shewanella baltica (strain OS195)</name>
    <dbReference type="NCBI Taxonomy" id="399599"/>
    <lineage>
        <taxon>Bacteria</taxon>
        <taxon>Pseudomonadati</taxon>
        <taxon>Pseudomonadota</taxon>
        <taxon>Gammaproteobacteria</taxon>
        <taxon>Alteromonadales</taxon>
        <taxon>Shewanellaceae</taxon>
        <taxon>Shewanella</taxon>
    </lineage>
</organism>
<keyword id="KW-0997">Cell inner membrane</keyword>
<keyword id="KW-1003">Cell membrane</keyword>
<keyword id="KW-0963">Cytoplasm</keyword>
<keyword id="KW-0472">Membrane</keyword>
<evidence type="ECO:0000255" key="1">
    <source>
        <dbReference type="HAMAP-Rule" id="MF_00695"/>
    </source>
</evidence>
<sequence length="205" mass="22763">MNEQLVNRTMAFAGILQAIAQVQHLARHGELDNAELAASLNTILVTNPDNTADVYQDKIVLQKGYKLILNQLGDSSQKDVEITRYLVGVLALERKLVRSNSGLGMLAERINQVNRQLHHFAITDEQVIANLASIYSDIISNLGPKIQISGNPVCLQRPIIQQKIRALLLAAMRSAVLWRQLGGKRRHLVFARKAIVDTAKKSLTL</sequence>
<reference key="1">
    <citation type="submission" date="2007-11" db="EMBL/GenBank/DDBJ databases">
        <title>Complete sequence of chromosome of Shewanella baltica OS195.</title>
        <authorList>
            <consortium name="US DOE Joint Genome Institute"/>
            <person name="Copeland A."/>
            <person name="Lucas S."/>
            <person name="Lapidus A."/>
            <person name="Barry K."/>
            <person name="Glavina del Rio T."/>
            <person name="Dalin E."/>
            <person name="Tice H."/>
            <person name="Pitluck S."/>
            <person name="Chain P."/>
            <person name="Malfatti S."/>
            <person name="Shin M."/>
            <person name="Vergez L."/>
            <person name="Schmutz J."/>
            <person name="Larimer F."/>
            <person name="Land M."/>
            <person name="Hauser L."/>
            <person name="Kyrpides N."/>
            <person name="Kim E."/>
            <person name="Brettar I."/>
            <person name="Rodrigues J."/>
            <person name="Konstantinidis K."/>
            <person name="Klappenbach J."/>
            <person name="Hofle M."/>
            <person name="Tiedje J."/>
            <person name="Richardson P."/>
        </authorList>
    </citation>
    <scope>NUCLEOTIDE SEQUENCE [LARGE SCALE GENOMIC DNA]</scope>
    <source>
        <strain>OS195</strain>
    </source>
</reference>
<accession>A9L4H0</accession>
<name>HFLD_SHEB9</name>
<gene>
    <name evidence="1" type="primary">hflD</name>
    <name type="ordered locus">Sbal195_2592</name>
</gene>
<dbReference type="EMBL" id="CP000891">
    <property type="protein sequence ID" value="ABX49760.1"/>
    <property type="molecule type" value="Genomic_DNA"/>
</dbReference>
<dbReference type="RefSeq" id="WP_006086256.1">
    <property type="nucleotide sequence ID" value="NC_009997.1"/>
</dbReference>
<dbReference type="SMR" id="A9L4H0"/>
<dbReference type="GeneID" id="11772688"/>
<dbReference type="KEGG" id="sbn:Sbal195_2592"/>
<dbReference type="HOGENOM" id="CLU_098920_0_0_6"/>
<dbReference type="Proteomes" id="UP000000770">
    <property type="component" value="Chromosome"/>
</dbReference>
<dbReference type="GO" id="GO:0005737">
    <property type="term" value="C:cytoplasm"/>
    <property type="evidence" value="ECO:0007669"/>
    <property type="project" value="UniProtKB-SubCell"/>
</dbReference>
<dbReference type="GO" id="GO:0005886">
    <property type="term" value="C:plasma membrane"/>
    <property type="evidence" value="ECO:0007669"/>
    <property type="project" value="UniProtKB-SubCell"/>
</dbReference>
<dbReference type="FunFam" id="1.10.3890.10:FF:000002">
    <property type="entry name" value="High frequency lysogenization protein HflD homolog"/>
    <property type="match status" value="1"/>
</dbReference>
<dbReference type="Gene3D" id="1.10.3890.10">
    <property type="entry name" value="HflD-like"/>
    <property type="match status" value="1"/>
</dbReference>
<dbReference type="HAMAP" id="MF_00695">
    <property type="entry name" value="HflD_protein"/>
    <property type="match status" value="1"/>
</dbReference>
<dbReference type="InterPro" id="IPR007451">
    <property type="entry name" value="HflD"/>
</dbReference>
<dbReference type="InterPro" id="IPR035932">
    <property type="entry name" value="HflD-like_sf"/>
</dbReference>
<dbReference type="NCBIfam" id="NF001246">
    <property type="entry name" value="PRK00218.1-2"/>
    <property type="match status" value="1"/>
</dbReference>
<dbReference type="NCBIfam" id="NF001248">
    <property type="entry name" value="PRK00218.1-4"/>
    <property type="match status" value="1"/>
</dbReference>
<dbReference type="PANTHER" id="PTHR38100">
    <property type="entry name" value="HIGH FREQUENCY LYSOGENIZATION PROTEIN HFLD"/>
    <property type="match status" value="1"/>
</dbReference>
<dbReference type="PANTHER" id="PTHR38100:SF1">
    <property type="entry name" value="HIGH FREQUENCY LYSOGENIZATION PROTEIN HFLD"/>
    <property type="match status" value="1"/>
</dbReference>
<dbReference type="Pfam" id="PF04356">
    <property type="entry name" value="DUF489"/>
    <property type="match status" value="1"/>
</dbReference>
<dbReference type="SUPFAM" id="SSF101322">
    <property type="entry name" value="YcfC-like"/>
    <property type="match status" value="1"/>
</dbReference>
<proteinExistence type="inferred from homology"/>
<protein>
    <recommendedName>
        <fullName evidence="1">High frequency lysogenization protein HflD homolog</fullName>
    </recommendedName>
</protein>